<comment type="function">
    <text evidence="1">The full peptide presents antibacterial and cytotoxic activities. The synthetic C-terminus (AA 33-76) inhibits voltage-gated potassium channels Kv1.1/KCNA1, Kv1.2/KCNA2, and Kv1.3/KCNA3.</text>
</comment>
<comment type="subcellular location">
    <subcellularLocation>
        <location evidence="6">Secreted</location>
    </subcellularLocation>
</comment>
<comment type="tissue specificity">
    <text evidence="6">Expressed by the venom gland.</text>
</comment>
<comment type="similarity">
    <text evidence="5">Belongs to the long chain scorpion toxin family. Class 2 subfamily.</text>
</comment>
<dbReference type="EMBL" id="DQ465346">
    <property type="protein sequence ID" value="ABE98262.1"/>
    <property type="molecule type" value="mRNA"/>
</dbReference>
<dbReference type="EMBL" id="EU089740">
    <property type="protein sequence ID" value="ABV64385.1"/>
    <property type="molecule type" value="Genomic_DNA"/>
</dbReference>
<dbReference type="SMR" id="Q0GY45"/>
<dbReference type="GO" id="GO:0005576">
    <property type="term" value="C:extracellular region"/>
    <property type="evidence" value="ECO:0007669"/>
    <property type="project" value="UniProtKB-SubCell"/>
</dbReference>
<dbReference type="GO" id="GO:0015459">
    <property type="term" value="F:potassium channel regulator activity"/>
    <property type="evidence" value="ECO:0007669"/>
    <property type="project" value="UniProtKB-KW"/>
</dbReference>
<dbReference type="GO" id="GO:0090729">
    <property type="term" value="F:toxin activity"/>
    <property type="evidence" value="ECO:0007669"/>
    <property type="project" value="UniProtKB-KW"/>
</dbReference>
<dbReference type="GO" id="GO:0042742">
    <property type="term" value="P:defense response to bacterium"/>
    <property type="evidence" value="ECO:0007669"/>
    <property type="project" value="UniProtKB-KW"/>
</dbReference>
<dbReference type="InterPro" id="IPR029237">
    <property type="entry name" value="Long_scorpion_toxin_alpha/beta"/>
</dbReference>
<dbReference type="Pfam" id="PF14866">
    <property type="entry name" value="Scorpion_toxin_alpha-beta"/>
    <property type="match status" value="1"/>
</dbReference>
<dbReference type="PROSITE" id="PS51862">
    <property type="entry name" value="BSPN_CSAB"/>
    <property type="match status" value="1"/>
</dbReference>
<feature type="signal peptide" evidence="2">
    <location>
        <begin position="1"/>
        <end position="25"/>
    </location>
</feature>
<feature type="propeptide" id="PRO_0000274686" evidence="6">
    <location>
        <begin position="26"/>
        <end position="44"/>
    </location>
</feature>
<feature type="chain" id="PRO_0000274687" description="Potassium channel toxin TtrKIK">
    <location>
        <begin position="45"/>
        <end position="91"/>
    </location>
</feature>
<feature type="domain" description="BetaSPN-type CS-alpha/beta" evidence="3">
    <location>
        <begin position="58"/>
        <end position="91"/>
    </location>
</feature>
<feature type="disulfide bond" evidence="3">
    <location>
        <begin position="61"/>
        <end position="81"/>
    </location>
</feature>
<feature type="disulfide bond" evidence="3">
    <location>
        <begin position="68"/>
        <end position="86"/>
    </location>
</feature>
<feature type="disulfide bond" evidence="3">
    <location>
        <begin position="72"/>
        <end position="88"/>
    </location>
</feature>
<proteinExistence type="inferred from homology"/>
<evidence type="ECO:0000250" key="1">
    <source>
        <dbReference type="UniProtKB" id="Q0GY41"/>
    </source>
</evidence>
<evidence type="ECO:0000255" key="2"/>
<evidence type="ECO:0000255" key="3">
    <source>
        <dbReference type="PROSITE-ProRule" id="PRU01209"/>
    </source>
</evidence>
<evidence type="ECO:0000303" key="4">
    <source>
    </source>
</evidence>
<evidence type="ECO:0000305" key="5"/>
<evidence type="ECO:0000305" key="6">
    <source>
    </source>
</evidence>
<accession>Q0GY45</accession>
<accession>A8U076</accession>
<sequence>MVATNRCCVFALLFALLLVHSLTEAGKGKEVLGKIKDKLIEAKDKIKSGWERLTSQSEYACPAIEKFCEDHCAAKKAVGKCDDFKCNCIKL</sequence>
<organism>
    <name type="scientific">Tityus trivittatus</name>
    <name type="common">Argentinean scorpion</name>
    <dbReference type="NCBI Taxonomy" id="369776"/>
    <lineage>
        <taxon>Eukaryota</taxon>
        <taxon>Metazoa</taxon>
        <taxon>Ecdysozoa</taxon>
        <taxon>Arthropoda</taxon>
        <taxon>Chelicerata</taxon>
        <taxon>Arachnida</taxon>
        <taxon>Scorpiones</taxon>
        <taxon>Buthida</taxon>
        <taxon>Buthoidea</taxon>
        <taxon>Buthidae</taxon>
        <taxon>Tityus</taxon>
    </lineage>
</organism>
<protein>
    <recommendedName>
        <fullName evidence="4">Potassium channel toxin TtrKIK</fullName>
    </recommendedName>
</protein>
<reference key="1">
    <citation type="journal article" date="2007" name="Peptides">
        <title>Wide phylogenetic distribution of scorpine and long-chain beta-KTx-like peptides in scorpion venoms: identification of 'orphan' components.</title>
        <authorList>
            <person name="Diego-Garcia E."/>
            <person name="Schwartz E.F."/>
            <person name="D'Suze G."/>
            <person name="Gonzalez S.A."/>
            <person name="Batista C.V."/>
            <person name="Garcia B.I."/>
            <person name="Rodriguez de la Vega R.C."/>
            <person name="Possani L.D."/>
        </authorList>
    </citation>
    <scope>NUCLEOTIDE SEQUENCE [MRNA]</scope>
    <source>
        <tissue>Venom gland</tissue>
    </source>
</reference>
<reference key="2">
    <citation type="submission" date="2007-08" db="EMBL/GenBank/DDBJ databases">
        <authorList>
            <person name="Diego-Garcia E."/>
            <person name="Schwartz E.F."/>
            <person name="Rodriguez de la Vega R.C."/>
            <person name="Possani L.D."/>
        </authorList>
    </citation>
    <scope>NUCLEOTIDE SEQUENCE [GENOMIC DNA]</scope>
</reference>
<keyword id="KW-0044">Antibiotic</keyword>
<keyword id="KW-0929">Antimicrobial</keyword>
<keyword id="KW-1015">Disulfide bond</keyword>
<keyword id="KW-0872">Ion channel impairing toxin</keyword>
<keyword id="KW-0528">Neurotoxin</keyword>
<keyword id="KW-0632">Potassium channel impairing toxin</keyword>
<keyword id="KW-0964">Secreted</keyword>
<keyword id="KW-0732">Signal</keyword>
<keyword id="KW-0800">Toxin</keyword>
<name>KBX2_TITTR</name>